<dbReference type="EMBL" id="CU234118">
    <property type="protein sequence ID" value="CAL76855.1"/>
    <property type="molecule type" value="Genomic_DNA"/>
</dbReference>
<dbReference type="RefSeq" id="WP_008963452.1">
    <property type="nucleotide sequence ID" value="NC_009445.1"/>
</dbReference>
<dbReference type="SMR" id="A4YSH9"/>
<dbReference type="STRING" id="114615.BRADO3052"/>
<dbReference type="KEGG" id="bra:BRADO3052"/>
<dbReference type="eggNOG" id="COG0244">
    <property type="taxonomic scope" value="Bacteria"/>
</dbReference>
<dbReference type="HOGENOM" id="CLU_092227_0_0_5"/>
<dbReference type="OrthoDB" id="9791972at2"/>
<dbReference type="Proteomes" id="UP000001994">
    <property type="component" value="Chromosome"/>
</dbReference>
<dbReference type="GO" id="GO:0015934">
    <property type="term" value="C:large ribosomal subunit"/>
    <property type="evidence" value="ECO:0007669"/>
    <property type="project" value="InterPro"/>
</dbReference>
<dbReference type="GO" id="GO:0070180">
    <property type="term" value="F:large ribosomal subunit rRNA binding"/>
    <property type="evidence" value="ECO:0007669"/>
    <property type="project" value="UniProtKB-UniRule"/>
</dbReference>
<dbReference type="GO" id="GO:0003735">
    <property type="term" value="F:structural constituent of ribosome"/>
    <property type="evidence" value="ECO:0007669"/>
    <property type="project" value="InterPro"/>
</dbReference>
<dbReference type="GO" id="GO:0006412">
    <property type="term" value="P:translation"/>
    <property type="evidence" value="ECO:0007669"/>
    <property type="project" value="UniProtKB-UniRule"/>
</dbReference>
<dbReference type="CDD" id="cd05797">
    <property type="entry name" value="Ribosomal_L10"/>
    <property type="match status" value="1"/>
</dbReference>
<dbReference type="Gene3D" id="3.30.70.1730">
    <property type="match status" value="1"/>
</dbReference>
<dbReference type="Gene3D" id="6.10.250.290">
    <property type="match status" value="1"/>
</dbReference>
<dbReference type="HAMAP" id="MF_00362">
    <property type="entry name" value="Ribosomal_uL10"/>
    <property type="match status" value="1"/>
</dbReference>
<dbReference type="InterPro" id="IPR001790">
    <property type="entry name" value="Ribosomal_uL10"/>
</dbReference>
<dbReference type="InterPro" id="IPR043141">
    <property type="entry name" value="Ribosomal_uL10-like_sf"/>
</dbReference>
<dbReference type="InterPro" id="IPR022973">
    <property type="entry name" value="Ribosomal_uL10_bac"/>
</dbReference>
<dbReference type="InterPro" id="IPR047865">
    <property type="entry name" value="Ribosomal_uL10_bac_type"/>
</dbReference>
<dbReference type="InterPro" id="IPR002363">
    <property type="entry name" value="Ribosomal_uL10_CS_bac"/>
</dbReference>
<dbReference type="NCBIfam" id="NF000955">
    <property type="entry name" value="PRK00099.1-1"/>
    <property type="match status" value="1"/>
</dbReference>
<dbReference type="PANTHER" id="PTHR11560">
    <property type="entry name" value="39S RIBOSOMAL PROTEIN L10, MITOCHONDRIAL"/>
    <property type="match status" value="1"/>
</dbReference>
<dbReference type="Pfam" id="PF00466">
    <property type="entry name" value="Ribosomal_L10"/>
    <property type="match status" value="1"/>
</dbReference>
<dbReference type="SUPFAM" id="SSF160369">
    <property type="entry name" value="Ribosomal protein L10-like"/>
    <property type="match status" value="1"/>
</dbReference>
<dbReference type="PROSITE" id="PS01109">
    <property type="entry name" value="RIBOSOMAL_L10"/>
    <property type="match status" value="1"/>
</dbReference>
<accession>A4YSH9</accession>
<reference key="1">
    <citation type="journal article" date="2007" name="Science">
        <title>Legumes symbioses: absence of nod genes in photosynthetic bradyrhizobia.</title>
        <authorList>
            <person name="Giraud E."/>
            <person name="Moulin L."/>
            <person name="Vallenet D."/>
            <person name="Barbe V."/>
            <person name="Cytryn E."/>
            <person name="Avarre J.-C."/>
            <person name="Jaubert M."/>
            <person name="Simon D."/>
            <person name="Cartieaux F."/>
            <person name="Prin Y."/>
            <person name="Bena G."/>
            <person name="Hannibal L."/>
            <person name="Fardoux J."/>
            <person name="Kojadinovic M."/>
            <person name="Vuillet L."/>
            <person name="Lajus A."/>
            <person name="Cruveiller S."/>
            <person name="Rouy Z."/>
            <person name="Mangenot S."/>
            <person name="Segurens B."/>
            <person name="Dossat C."/>
            <person name="Franck W.L."/>
            <person name="Chang W.-S."/>
            <person name="Saunders E."/>
            <person name="Bruce D."/>
            <person name="Richardson P."/>
            <person name="Normand P."/>
            <person name="Dreyfus B."/>
            <person name="Pignol D."/>
            <person name="Stacey G."/>
            <person name="Emerich D."/>
            <person name="Vermeglio A."/>
            <person name="Medigue C."/>
            <person name="Sadowsky M."/>
        </authorList>
    </citation>
    <scope>NUCLEOTIDE SEQUENCE [LARGE SCALE GENOMIC DNA]</scope>
    <source>
        <strain>ORS 278</strain>
    </source>
</reference>
<protein>
    <recommendedName>
        <fullName evidence="1">Large ribosomal subunit protein uL10</fullName>
    </recommendedName>
    <alternativeName>
        <fullName evidence="2">50S ribosomal protein L10</fullName>
    </alternativeName>
</protein>
<sequence>MERAAKKEAVEQLHEVFKTTGVAVVAHYSGLTVAQMQNLRKQMKQAGASVKVSKNRLAKIALEGTDVVGIGPLLKGPTVIATSNDPVAAPKVAIEFAKANEKFVILGGSMGSTVLNVDSVKALASLPSLDELRGKLVGLIQAPATKLAQLANAPAAKVARVIQAHASKGEAA</sequence>
<gene>
    <name evidence="1" type="primary">rplJ</name>
    <name type="ordered locus">BRADO3052</name>
</gene>
<proteinExistence type="inferred from homology"/>
<organism>
    <name type="scientific">Bradyrhizobium sp. (strain ORS 278)</name>
    <dbReference type="NCBI Taxonomy" id="114615"/>
    <lineage>
        <taxon>Bacteria</taxon>
        <taxon>Pseudomonadati</taxon>
        <taxon>Pseudomonadota</taxon>
        <taxon>Alphaproteobacteria</taxon>
        <taxon>Hyphomicrobiales</taxon>
        <taxon>Nitrobacteraceae</taxon>
        <taxon>Bradyrhizobium</taxon>
    </lineage>
</organism>
<name>RL10_BRASO</name>
<comment type="function">
    <text evidence="1">Forms part of the ribosomal stalk, playing a central role in the interaction of the ribosome with GTP-bound translation factors.</text>
</comment>
<comment type="subunit">
    <text evidence="1">Part of the ribosomal stalk of the 50S ribosomal subunit. The N-terminus interacts with L11 and the large rRNA to form the base of the stalk. The C-terminus forms an elongated spine to which L12 dimers bind in a sequential fashion forming a multimeric L10(L12)X complex.</text>
</comment>
<comment type="similarity">
    <text evidence="1">Belongs to the universal ribosomal protein uL10 family.</text>
</comment>
<feature type="chain" id="PRO_1000005474" description="Large ribosomal subunit protein uL10">
    <location>
        <begin position="1"/>
        <end position="172"/>
    </location>
</feature>
<keyword id="KW-1185">Reference proteome</keyword>
<keyword id="KW-0687">Ribonucleoprotein</keyword>
<keyword id="KW-0689">Ribosomal protein</keyword>
<keyword id="KW-0694">RNA-binding</keyword>
<keyword id="KW-0699">rRNA-binding</keyword>
<evidence type="ECO:0000255" key="1">
    <source>
        <dbReference type="HAMAP-Rule" id="MF_00362"/>
    </source>
</evidence>
<evidence type="ECO:0000305" key="2"/>